<dbReference type="EMBL" id="EF439707">
    <property type="protein sequence ID" value="ABO34138.1"/>
    <property type="molecule type" value="Genomic_DNA"/>
</dbReference>
<dbReference type="RefSeq" id="XP_003861404.1">
    <property type="nucleotide sequence ID" value="XM_003861356.1"/>
</dbReference>
<dbReference type="RefSeq" id="XP_003861405.1">
    <property type="nucleotide sequence ID" value="XM_003861357.1"/>
</dbReference>
<dbReference type="SMR" id="A4GVE9"/>
<dbReference type="GeneID" id="13388650"/>
<dbReference type="GeneID" id="13388651"/>
<dbReference type="KEGG" id="ldo:LDBPK_250740"/>
<dbReference type="KEGG" id="ldo:LDBPK_250750"/>
<dbReference type="VEuPathDB" id="TriTrypDB:LdBPK_250750.1"/>
<dbReference type="VEuPathDB" id="TriTrypDB:LdCL_250012700"/>
<dbReference type="VEuPathDB" id="TriTrypDB:LdCL_250012800"/>
<dbReference type="VEuPathDB" id="TriTrypDB:LdCL_250012900"/>
<dbReference type="VEuPathDB" id="TriTrypDB:LDHU3_25.0940"/>
<dbReference type="VEuPathDB" id="TriTrypDB:LDHU3_25.0950"/>
<dbReference type="VEuPathDB" id="TriTrypDB:LDHU3_25.0960"/>
<dbReference type="OMA" id="KDDVRMP"/>
<dbReference type="OrthoDB" id="239323at2759"/>
<dbReference type="SABIO-RK" id="A4GVE9"/>
<dbReference type="GO" id="GO:0005737">
    <property type="term" value="C:cytoplasm"/>
    <property type="evidence" value="ECO:0007669"/>
    <property type="project" value="UniProtKB-SubCell"/>
</dbReference>
<dbReference type="GO" id="GO:0043022">
    <property type="term" value="F:ribosome binding"/>
    <property type="evidence" value="ECO:0007669"/>
    <property type="project" value="InterPro"/>
</dbReference>
<dbReference type="GO" id="GO:0003723">
    <property type="term" value="F:RNA binding"/>
    <property type="evidence" value="ECO:0007669"/>
    <property type="project" value="UniProtKB-KW"/>
</dbReference>
<dbReference type="GO" id="GO:0003746">
    <property type="term" value="F:translation elongation factor activity"/>
    <property type="evidence" value="ECO:0007669"/>
    <property type="project" value="UniProtKB-KW"/>
</dbReference>
<dbReference type="GO" id="GO:0003743">
    <property type="term" value="F:translation initiation factor activity"/>
    <property type="evidence" value="ECO:0007669"/>
    <property type="project" value="UniProtKB-KW"/>
</dbReference>
<dbReference type="GO" id="GO:0008612">
    <property type="term" value="P:peptidyl-lysine modification to peptidyl-hypusine"/>
    <property type="evidence" value="ECO:0000314"/>
    <property type="project" value="UniProtKB"/>
</dbReference>
<dbReference type="GO" id="GO:0045901">
    <property type="term" value="P:positive regulation of translational elongation"/>
    <property type="evidence" value="ECO:0007669"/>
    <property type="project" value="InterPro"/>
</dbReference>
<dbReference type="GO" id="GO:0045905">
    <property type="term" value="P:positive regulation of translational termination"/>
    <property type="evidence" value="ECO:0007669"/>
    <property type="project" value="InterPro"/>
</dbReference>
<dbReference type="CDD" id="cd04468">
    <property type="entry name" value="S1_eIF5A"/>
    <property type="match status" value="1"/>
</dbReference>
<dbReference type="FunFam" id="2.30.30.30:FF:000007">
    <property type="entry name" value="Eukaryotic translation initiation factor 5A"/>
    <property type="match status" value="1"/>
</dbReference>
<dbReference type="FunFam" id="2.40.50.140:FF:000307">
    <property type="entry name" value="Eukaryotic translation initiation factor 5A"/>
    <property type="match status" value="1"/>
</dbReference>
<dbReference type="Gene3D" id="2.30.30.30">
    <property type="match status" value="1"/>
</dbReference>
<dbReference type="Gene3D" id="2.40.50.140">
    <property type="entry name" value="Nucleic acid-binding proteins"/>
    <property type="match status" value="1"/>
</dbReference>
<dbReference type="InterPro" id="IPR001884">
    <property type="entry name" value="IF5A-like"/>
</dbReference>
<dbReference type="InterPro" id="IPR048670">
    <property type="entry name" value="IF5A-like_N"/>
</dbReference>
<dbReference type="InterPro" id="IPR012340">
    <property type="entry name" value="NA-bd_OB-fold"/>
</dbReference>
<dbReference type="InterPro" id="IPR014722">
    <property type="entry name" value="Rib_uL2_dom2"/>
</dbReference>
<dbReference type="InterPro" id="IPR019769">
    <property type="entry name" value="Trans_elong_IF5A_hypusine_site"/>
</dbReference>
<dbReference type="InterPro" id="IPR020189">
    <property type="entry name" value="Transl_elong_IF5A_C"/>
</dbReference>
<dbReference type="InterPro" id="IPR008991">
    <property type="entry name" value="Translation_prot_SH3-like_sf"/>
</dbReference>
<dbReference type="NCBIfam" id="TIGR00037">
    <property type="entry name" value="eIF_5A"/>
    <property type="match status" value="1"/>
</dbReference>
<dbReference type="PANTHER" id="PTHR11673">
    <property type="entry name" value="TRANSLATION INITIATION FACTOR 5A FAMILY MEMBER"/>
    <property type="match status" value="1"/>
</dbReference>
<dbReference type="Pfam" id="PF01287">
    <property type="entry name" value="eIF-5a"/>
    <property type="match status" value="1"/>
</dbReference>
<dbReference type="Pfam" id="PF21485">
    <property type="entry name" value="IF5A-like_N"/>
    <property type="match status" value="1"/>
</dbReference>
<dbReference type="PIRSF" id="PIRSF003025">
    <property type="entry name" value="eIF5A"/>
    <property type="match status" value="1"/>
</dbReference>
<dbReference type="SMART" id="SM01376">
    <property type="entry name" value="eIF-5a"/>
    <property type="match status" value="1"/>
</dbReference>
<dbReference type="SUPFAM" id="SSF50249">
    <property type="entry name" value="Nucleic acid-binding proteins"/>
    <property type="match status" value="1"/>
</dbReference>
<dbReference type="SUPFAM" id="SSF50104">
    <property type="entry name" value="Translation proteins SH3-like domain"/>
    <property type="match status" value="1"/>
</dbReference>
<dbReference type="PROSITE" id="PS00302">
    <property type="entry name" value="IF5A_HYPUSINE"/>
    <property type="match status" value="1"/>
</dbReference>
<name>IF5A_LEIDO</name>
<protein>
    <recommendedName>
        <fullName evidence="2">Eukaryotic translation initiation factor 5A</fullName>
        <shortName evidence="2">eIF-5A</shortName>
    </recommendedName>
</protein>
<proteinExistence type="evidence at protein level"/>
<evidence type="ECO:0000250" key="1">
    <source>
        <dbReference type="UniProtKB" id="P23301"/>
    </source>
</evidence>
<evidence type="ECO:0000250" key="2">
    <source>
        <dbReference type="UniProtKB" id="Q9GU68"/>
    </source>
</evidence>
<evidence type="ECO:0000255" key="3"/>
<evidence type="ECO:0000256" key="4">
    <source>
        <dbReference type="SAM" id="MobiDB-lite"/>
    </source>
</evidence>
<evidence type="ECO:0000269" key="5">
    <source>
    </source>
</evidence>
<evidence type="ECO:0000305" key="6"/>
<evidence type="ECO:0000312" key="7">
    <source>
        <dbReference type="EMBL" id="ABO34138.1"/>
    </source>
</evidence>
<reference evidence="7" key="1">
    <citation type="submission" date="2007-02" db="EMBL/GenBank/DDBJ databases">
        <authorList>
            <person name="Singh S."/>
            <person name="Madhubala R."/>
        </authorList>
    </citation>
    <scope>NUCLEOTIDE SEQUENCE [GENOMIC DNA]</scope>
</reference>
<reference key="2">
    <citation type="journal article" date="2010" name="J. Biol. Chem.">
        <title>Identification and characterization of a novel deoxyhypusine synthase in Leishmania donovani.</title>
        <authorList>
            <person name="Chawla B."/>
            <person name="Jhingran A."/>
            <person name="Singh S."/>
            <person name="Tyagi N."/>
            <person name="Park M.H."/>
            <person name="Srinivasan N."/>
            <person name="Roberts S.C."/>
            <person name="Madhubala R."/>
        </authorList>
    </citation>
    <scope>HYPUSINE AT LYS-53</scope>
</reference>
<sequence>MSDEDHDFSHQGGGDNASKTYPLPAGALKKGGYVCINGRPCKVIDLSVSKTGKHGHAKVSIVATDIFTGNRLEDQAPSTHNVEVPFVKTFTYSVLDIQPNEDPSLPSHLSLMDDEGESREDLDMPPDVALATQIKEQFDSGKEVLVVVVSAMGTEQVLQTKNAAEK</sequence>
<organism>
    <name type="scientific">Leishmania donovani</name>
    <dbReference type="NCBI Taxonomy" id="5661"/>
    <lineage>
        <taxon>Eukaryota</taxon>
        <taxon>Discoba</taxon>
        <taxon>Euglenozoa</taxon>
        <taxon>Kinetoplastea</taxon>
        <taxon>Metakinetoplastina</taxon>
        <taxon>Trypanosomatida</taxon>
        <taxon>Trypanosomatidae</taxon>
        <taxon>Leishmaniinae</taxon>
        <taxon>Leishmania</taxon>
    </lineage>
</organism>
<feature type="initiator methionine" description="Removed" evidence="1">
    <location>
        <position position="1"/>
    </location>
</feature>
<feature type="chain" id="PRO_0000419761" description="Eukaryotic translation initiation factor 5A" evidence="6">
    <location>
        <begin position="2"/>
        <end position="166"/>
    </location>
</feature>
<feature type="region of interest" description="Disordered" evidence="4">
    <location>
        <begin position="1"/>
        <end position="21"/>
    </location>
</feature>
<feature type="region of interest" description="Disordered" evidence="4">
    <location>
        <begin position="101"/>
        <end position="121"/>
    </location>
</feature>
<feature type="compositionally biased region" description="Acidic residues" evidence="4">
    <location>
        <begin position="112"/>
        <end position="121"/>
    </location>
</feature>
<feature type="modified residue" description="Hypusine" evidence="5">
    <location>
        <position position="53"/>
    </location>
</feature>
<comment type="function">
    <text evidence="1">Translation factor that promotes translation elongation and termination, particularly upon ribosome stalling at specific amino acid sequence contexts (By similarity). Binds between the exit (E) and peptidyl (P) site of the ribosome and promotes rescue of stalled ribosome: specifically required for efficient translation of polyproline-containing peptides as well as other motifs that stall the ribosome (By similarity). Acts as a ribosome quality control (RQC) cofactor by joining the RQC complex to facilitate peptidyl transfer during CAT tailing step (By similarity).</text>
</comment>
<comment type="subcellular location">
    <subcellularLocation>
        <location evidence="1">Cytoplasm</location>
    </subcellularLocation>
</comment>
<comment type="PTM">
    <text evidence="5">Lys-53 undergoes hypusination, a unique post-translational modification that consists in the addition of a butylamino group from spermidine to lysine side chain, leading to the formation of the unusual amino acid hypusine. eIF-5As are the only known proteins to undergo this modification, which is essential for their function.</text>
</comment>
<comment type="similarity">
    <text evidence="3">Belongs to the eIF-5A family.</text>
</comment>
<accession>A4GVE9</accession>
<keyword id="KW-0963">Cytoplasm</keyword>
<keyword id="KW-0251">Elongation factor</keyword>
<keyword id="KW-0385">Hypusine</keyword>
<keyword id="KW-0396">Initiation factor</keyword>
<keyword id="KW-0648">Protein biosynthesis</keyword>
<keyword id="KW-0694">RNA-binding</keyword>